<accession>C1DK47</accession>
<sequence>MYTALLQSMNRLHPRAWDFIQLVRLDRPIGIYLLLWPTLWAVWIAADGSPSLKHVLIFTCGVILMRSAGCVINDFADRNFDGHVARTRQRPLATGRIRTREAWALFAVLVALSFGLVLLTDPFTVALSFGALAVASLYPFMKRYTHLPQLVLGAAYSWGIPMAFTAATGRLPLEAWLIFAANLAWTVAYDTYYAMTDREDDLKIGVKSTAILFGAADRAIILALQGLTLGLLLVVGMRLGLGPYFHLGLLVAALCFAWEFVTTRRREPQACFRAFLHNHWAGLAILVGLILDYGI</sequence>
<reference key="1">
    <citation type="journal article" date="2009" name="J. Bacteriol.">
        <title>Genome sequence of Azotobacter vinelandii, an obligate aerobe specialized to support diverse anaerobic metabolic processes.</title>
        <authorList>
            <person name="Setubal J.C."/>
            <person name="Dos Santos P."/>
            <person name="Goldman B.S."/>
            <person name="Ertesvaag H."/>
            <person name="Espin G."/>
            <person name="Rubio L.M."/>
            <person name="Valla S."/>
            <person name="Almeida N.F."/>
            <person name="Balasubramanian D."/>
            <person name="Cromes L."/>
            <person name="Curatti L."/>
            <person name="Du Z."/>
            <person name="Godsy E."/>
            <person name="Goodner B."/>
            <person name="Hellner-Burris K."/>
            <person name="Hernandez J.A."/>
            <person name="Houmiel K."/>
            <person name="Imperial J."/>
            <person name="Kennedy C."/>
            <person name="Larson T.J."/>
            <person name="Latreille P."/>
            <person name="Ligon L.S."/>
            <person name="Lu J."/>
            <person name="Maerk M."/>
            <person name="Miller N.M."/>
            <person name="Norton S."/>
            <person name="O'Carroll I.P."/>
            <person name="Paulsen I."/>
            <person name="Raulfs E.C."/>
            <person name="Roemer R."/>
            <person name="Rosser J."/>
            <person name="Segura D."/>
            <person name="Slater S."/>
            <person name="Stricklin S.L."/>
            <person name="Studholme D.J."/>
            <person name="Sun J."/>
            <person name="Viana C.J."/>
            <person name="Wallin E."/>
            <person name="Wang B."/>
            <person name="Wheeler C."/>
            <person name="Zhu H."/>
            <person name="Dean D.R."/>
            <person name="Dixon R."/>
            <person name="Wood D."/>
        </authorList>
    </citation>
    <scope>NUCLEOTIDE SEQUENCE [LARGE SCALE GENOMIC DNA]</scope>
    <source>
        <strain>DJ / ATCC BAA-1303</strain>
    </source>
</reference>
<proteinExistence type="inferred from homology"/>
<organism>
    <name type="scientific">Azotobacter vinelandii (strain DJ / ATCC BAA-1303)</name>
    <dbReference type="NCBI Taxonomy" id="322710"/>
    <lineage>
        <taxon>Bacteria</taxon>
        <taxon>Pseudomonadati</taxon>
        <taxon>Pseudomonadota</taxon>
        <taxon>Gammaproteobacteria</taxon>
        <taxon>Pseudomonadales</taxon>
        <taxon>Pseudomonadaceae</taxon>
        <taxon>Azotobacter</taxon>
    </lineage>
</organism>
<evidence type="ECO:0000255" key="1">
    <source>
        <dbReference type="HAMAP-Rule" id="MF_01635"/>
    </source>
</evidence>
<comment type="function">
    <text evidence="1">Catalyzes the prenylation of para-hydroxybenzoate (PHB) with an all-trans polyprenyl group. Mediates the second step in the final reaction sequence of ubiquinone-8 (UQ-8) biosynthesis, which is the condensation of the polyisoprenoid side chain with PHB, generating the first membrane-bound Q intermediate 3-octaprenyl-4-hydroxybenzoate.</text>
</comment>
<comment type="catalytic activity">
    <reaction evidence="1">
        <text>all-trans-octaprenyl diphosphate + 4-hydroxybenzoate = 4-hydroxy-3-(all-trans-octaprenyl)benzoate + diphosphate</text>
        <dbReference type="Rhea" id="RHEA:27782"/>
        <dbReference type="ChEBI" id="CHEBI:1617"/>
        <dbReference type="ChEBI" id="CHEBI:17879"/>
        <dbReference type="ChEBI" id="CHEBI:33019"/>
        <dbReference type="ChEBI" id="CHEBI:57711"/>
        <dbReference type="EC" id="2.5.1.39"/>
    </reaction>
</comment>
<comment type="cofactor">
    <cofactor evidence="1">
        <name>Mg(2+)</name>
        <dbReference type="ChEBI" id="CHEBI:18420"/>
    </cofactor>
</comment>
<comment type="pathway">
    <text evidence="1">Cofactor biosynthesis; ubiquinone biosynthesis.</text>
</comment>
<comment type="subcellular location">
    <subcellularLocation>
        <location evidence="1">Cell inner membrane</location>
        <topology evidence="1">Multi-pass membrane protein</topology>
    </subcellularLocation>
</comment>
<comment type="similarity">
    <text evidence="1">Belongs to the UbiA prenyltransferase family.</text>
</comment>
<feature type="chain" id="PRO_1000215801" description="4-hydroxybenzoate octaprenyltransferase">
    <location>
        <begin position="1"/>
        <end position="295"/>
    </location>
</feature>
<feature type="transmembrane region" description="Helical" evidence="1">
    <location>
        <begin position="28"/>
        <end position="48"/>
    </location>
</feature>
<feature type="transmembrane region" description="Helical" evidence="1">
    <location>
        <begin position="55"/>
        <end position="75"/>
    </location>
</feature>
<feature type="transmembrane region" description="Helical" evidence="1">
    <location>
        <begin position="103"/>
        <end position="123"/>
    </location>
</feature>
<feature type="transmembrane region" description="Helical" evidence="1">
    <location>
        <begin position="147"/>
        <end position="167"/>
    </location>
</feature>
<feature type="transmembrane region" description="Helical" evidence="1">
    <location>
        <begin position="175"/>
        <end position="195"/>
    </location>
</feature>
<feature type="transmembrane region" description="Helical" evidence="1">
    <location>
        <begin position="219"/>
        <end position="239"/>
    </location>
</feature>
<feature type="transmembrane region" description="Helical" evidence="1">
    <location>
        <begin position="241"/>
        <end position="261"/>
    </location>
</feature>
<feature type="transmembrane region" description="Helical" evidence="1">
    <location>
        <begin position="275"/>
        <end position="295"/>
    </location>
</feature>
<protein>
    <recommendedName>
        <fullName evidence="1">4-hydroxybenzoate octaprenyltransferase</fullName>
        <ecNumber evidence="1">2.5.1.39</ecNumber>
    </recommendedName>
    <alternativeName>
        <fullName evidence="1">4-HB polyprenyltransferase</fullName>
    </alternativeName>
</protein>
<name>UBIA_AZOVD</name>
<keyword id="KW-0997">Cell inner membrane</keyword>
<keyword id="KW-1003">Cell membrane</keyword>
<keyword id="KW-0460">Magnesium</keyword>
<keyword id="KW-0472">Membrane</keyword>
<keyword id="KW-0808">Transferase</keyword>
<keyword id="KW-0812">Transmembrane</keyword>
<keyword id="KW-1133">Transmembrane helix</keyword>
<keyword id="KW-0831">Ubiquinone biosynthesis</keyword>
<gene>
    <name evidence="1" type="primary">ubiA</name>
    <name type="ordered locus">Avin_48510</name>
</gene>
<dbReference type="EC" id="2.5.1.39" evidence="1"/>
<dbReference type="EMBL" id="CP001157">
    <property type="protein sequence ID" value="ACO80952.1"/>
    <property type="molecule type" value="Genomic_DNA"/>
</dbReference>
<dbReference type="RefSeq" id="WP_012703314.1">
    <property type="nucleotide sequence ID" value="NC_012560.1"/>
</dbReference>
<dbReference type="SMR" id="C1DK47"/>
<dbReference type="STRING" id="322710.Avin_48510"/>
<dbReference type="EnsemblBacteria" id="ACO80952">
    <property type="protein sequence ID" value="ACO80952"/>
    <property type="gene ID" value="Avin_48510"/>
</dbReference>
<dbReference type="GeneID" id="88187717"/>
<dbReference type="KEGG" id="avn:Avin_48510"/>
<dbReference type="eggNOG" id="COG0382">
    <property type="taxonomic scope" value="Bacteria"/>
</dbReference>
<dbReference type="HOGENOM" id="CLU_034879_1_0_6"/>
<dbReference type="OrthoDB" id="9782418at2"/>
<dbReference type="UniPathway" id="UPA00232"/>
<dbReference type="Proteomes" id="UP000002424">
    <property type="component" value="Chromosome"/>
</dbReference>
<dbReference type="GO" id="GO:0005886">
    <property type="term" value="C:plasma membrane"/>
    <property type="evidence" value="ECO:0007669"/>
    <property type="project" value="UniProtKB-SubCell"/>
</dbReference>
<dbReference type="GO" id="GO:0008412">
    <property type="term" value="F:4-hydroxybenzoate polyprenyltransferase activity"/>
    <property type="evidence" value="ECO:0007669"/>
    <property type="project" value="UniProtKB-UniRule"/>
</dbReference>
<dbReference type="GO" id="GO:0006744">
    <property type="term" value="P:ubiquinone biosynthetic process"/>
    <property type="evidence" value="ECO:0007669"/>
    <property type="project" value="UniProtKB-UniRule"/>
</dbReference>
<dbReference type="CDD" id="cd13959">
    <property type="entry name" value="PT_UbiA_COQ2"/>
    <property type="match status" value="1"/>
</dbReference>
<dbReference type="FunFam" id="1.10.357.140:FF:000002">
    <property type="entry name" value="4-hydroxybenzoate octaprenyltransferase"/>
    <property type="match status" value="1"/>
</dbReference>
<dbReference type="FunFam" id="1.20.120.1780:FF:000001">
    <property type="entry name" value="4-hydroxybenzoate octaprenyltransferase"/>
    <property type="match status" value="1"/>
</dbReference>
<dbReference type="Gene3D" id="1.10.357.140">
    <property type="entry name" value="UbiA prenyltransferase"/>
    <property type="match status" value="1"/>
</dbReference>
<dbReference type="Gene3D" id="1.20.120.1780">
    <property type="entry name" value="UbiA prenyltransferase"/>
    <property type="match status" value="1"/>
</dbReference>
<dbReference type="HAMAP" id="MF_01635">
    <property type="entry name" value="UbiA"/>
    <property type="match status" value="1"/>
</dbReference>
<dbReference type="InterPro" id="IPR006370">
    <property type="entry name" value="HB_polyprenyltransferase-like"/>
</dbReference>
<dbReference type="InterPro" id="IPR039653">
    <property type="entry name" value="Prenyltransferase"/>
</dbReference>
<dbReference type="InterPro" id="IPR000537">
    <property type="entry name" value="UbiA_prenyltransferase"/>
</dbReference>
<dbReference type="InterPro" id="IPR030470">
    <property type="entry name" value="UbiA_prenylTrfase_CS"/>
</dbReference>
<dbReference type="InterPro" id="IPR044878">
    <property type="entry name" value="UbiA_sf"/>
</dbReference>
<dbReference type="NCBIfam" id="TIGR01474">
    <property type="entry name" value="ubiA_proteo"/>
    <property type="match status" value="1"/>
</dbReference>
<dbReference type="PANTHER" id="PTHR11048:SF28">
    <property type="entry name" value="4-HYDROXYBENZOATE POLYPRENYLTRANSFERASE, MITOCHONDRIAL"/>
    <property type="match status" value="1"/>
</dbReference>
<dbReference type="PANTHER" id="PTHR11048">
    <property type="entry name" value="PRENYLTRANSFERASES"/>
    <property type="match status" value="1"/>
</dbReference>
<dbReference type="Pfam" id="PF01040">
    <property type="entry name" value="UbiA"/>
    <property type="match status" value="1"/>
</dbReference>
<dbReference type="PROSITE" id="PS00943">
    <property type="entry name" value="UBIA"/>
    <property type="match status" value="1"/>
</dbReference>